<reference key="1">
    <citation type="journal article" date="2000" name="Nature">
        <title>Complete genome sequence of Pseudomonas aeruginosa PAO1, an opportunistic pathogen.</title>
        <authorList>
            <person name="Stover C.K."/>
            <person name="Pham X.-Q.T."/>
            <person name="Erwin A.L."/>
            <person name="Mizoguchi S.D."/>
            <person name="Warrener P."/>
            <person name="Hickey M.J."/>
            <person name="Brinkman F.S.L."/>
            <person name="Hufnagle W.O."/>
            <person name="Kowalik D.J."/>
            <person name="Lagrou M."/>
            <person name="Garber R.L."/>
            <person name="Goltry L."/>
            <person name="Tolentino E."/>
            <person name="Westbrock-Wadman S."/>
            <person name="Yuan Y."/>
            <person name="Brody L.L."/>
            <person name="Coulter S.N."/>
            <person name="Folger K.R."/>
            <person name="Kas A."/>
            <person name="Larbig K."/>
            <person name="Lim R.M."/>
            <person name="Smith K.A."/>
            <person name="Spencer D.H."/>
            <person name="Wong G.K.-S."/>
            <person name="Wu Z."/>
            <person name="Paulsen I.T."/>
            <person name="Reizer J."/>
            <person name="Saier M.H. Jr."/>
            <person name="Hancock R.E.W."/>
            <person name="Lory S."/>
            <person name="Olson M.V."/>
        </authorList>
    </citation>
    <scope>NUCLEOTIDE SEQUENCE [LARGE SCALE GENOMIC DNA]</scope>
    <source>
        <strain>ATCC 15692 / DSM 22644 / CIP 104116 / JCM 14847 / LMG 12228 / 1C / PRS 101 / PAO1</strain>
    </source>
</reference>
<accession>Q9HXI8</accession>
<evidence type="ECO:0000255" key="1">
    <source>
        <dbReference type="HAMAP-Rule" id="MF_00331"/>
    </source>
</evidence>
<keyword id="KW-0001">2Fe-2S</keyword>
<keyword id="KW-0963">Cytoplasm</keyword>
<keyword id="KW-0408">Iron</keyword>
<keyword id="KW-0411">Iron-sulfur</keyword>
<keyword id="KW-0479">Metal-binding</keyword>
<keyword id="KW-0663">Pyridoxal phosphate</keyword>
<keyword id="KW-1185">Reference proteome</keyword>
<keyword id="KW-0808">Transferase</keyword>
<comment type="function">
    <text evidence="1">Master enzyme that delivers sulfur to a number of partners involved in Fe-S cluster assembly, tRNA modification or cofactor biosynthesis. Catalyzes the removal of elemental sulfur atoms from cysteine to produce alanine. Functions as a sulfur delivery protein for Fe-S cluster synthesis onto IscU, an Fe-S scaffold assembly protein, as well as other S acceptor proteins.</text>
</comment>
<comment type="catalytic activity">
    <reaction evidence="1">
        <text>(sulfur carrier)-H + L-cysteine = (sulfur carrier)-SH + L-alanine</text>
        <dbReference type="Rhea" id="RHEA:43892"/>
        <dbReference type="Rhea" id="RHEA-COMP:14737"/>
        <dbReference type="Rhea" id="RHEA-COMP:14739"/>
        <dbReference type="ChEBI" id="CHEBI:29917"/>
        <dbReference type="ChEBI" id="CHEBI:35235"/>
        <dbReference type="ChEBI" id="CHEBI:57972"/>
        <dbReference type="ChEBI" id="CHEBI:64428"/>
        <dbReference type="EC" id="2.8.1.7"/>
    </reaction>
</comment>
<comment type="cofactor">
    <cofactor evidence="1">
        <name>pyridoxal 5'-phosphate</name>
        <dbReference type="ChEBI" id="CHEBI:597326"/>
    </cofactor>
</comment>
<comment type="pathway">
    <text evidence="1">Cofactor biosynthesis; iron-sulfur cluster biosynthesis.</text>
</comment>
<comment type="subunit">
    <text evidence="1">Homodimer. Forms a heterotetramer with IscU, interacts with other sulfur acceptors.</text>
</comment>
<comment type="subcellular location">
    <subcellularLocation>
        <location evidence="1">Cytoplasm</location>
    </subcellularLocation>
</comment>
<comment type="similarity">
    <text evidence="1">Belongs to the class-V pyridoxal-phosphate-dependent aminotransferase family. NifS/IscS subfamily.</text>
</comment>
<protein>
    <recommendedName>
        <fullName evidence="1">Cysteine desulfurase IscS</fullName>
        <ecNumber evidence="1">2.8.1.7</ecNumber>
    </recommendedName>
</protein>
<name>ISCS_PSEAE</name>
<proteinExistence type="inferred from homology"/>
<dbReference type="EC" id="2.8.1.7" evidence="1"/>
<dbReference type="EMBL" id="AE004091">
    <property type="protein sequence ID" value="AAG07201.1"/>
    <property type="molecule type" value="Genomic_DNA"/>
</dbReference>
<dbReference type="PIR" id="G83168">
    <property type="entry name" value="G83168"/>
</dbReference>
<dbReference type="RefSeq" id="NP_252503.1">
    <property type="nucleotide sequence ID" value="NC_002516.2"/>
</dbReference>
<dbReference type="RefSeq" id="WP_003092832.1">
    <property type="nucleotide sequence ID" value="NZ_QZGE01000001.1"/>
</dbReference>
<dbReference type="SMR" id="Q9HXI8"/>
<dbReference type="FunCoup" id="Q9HXI8">
    <property type="interactions" value="724"/>
</dbReference>
<dbReference type="STRING" id="208964.PA3814"/>
<dbReference type="PaxDb" id="208964-PA3814"/>
<dbReference type="GeneID" id="879918"/>
<dbReference type="KEGG" id="pae:PA3814"/>
<dbReference type="PATRIC" id="fig|208964.12.peg.3993"/>
<dbReference type="PseudoCAP" id="PA3814"/>
<dbReference type="HOGENOM" id="CLU_003433_0_2_6"/>
<dbReference type="InParanoid" id="Q9HXI8"/>
<dbReference type="OrthoDB" id="9808002at2"/>
<dbReference type="PhylomeDB" id="Q9HXI8"/>
<dbReference type="BioCyc" id="PAER208964:G1FZ6-3885-MONOMER"/>
<dbReference type="UniPathway" id="UPA00266"/>
<dbReference type="Proteomes" id="UP000002438">
    <property type="component" value="Chromosome"/>
</dbReference>
<dbReference type="GO" id="GO:1990221">
    <property type="term" value="C:L-cysteine desulfurase complex"/>
    <property type="evidence" value="ECO:0007669"/>
    <property type="project" value="UniProtKB-ARBA"/>
</dbReference>
<dbReference type="GO" id="GO:0051537">
    <property type="term" value="F:2 iron, 2 sulfur cluster binding"/>
    <property type="evidence" value="ECO:0007669"/>
    <property type="project" value="UniProtKB-UniRule"/>
</dbReference>
<dbReference type="GO" id="GO:0031071">
    <property type="term" value="F:cysteine desulfurase activity"/>
    <property type="evidence" value="ECO:0007669"/>
    <property type="project" value="UniProtKB-UniRule"/>
</dbReference>
<dbReference type="GO" id="GO:0046872">
    <property type="term" value="F:metal ion binding"/>
    <property type="evidence" value="ECO:0007669"/>
    <property type="project" value="UniProtKB-KW"/>
</dbReference>
<dbReference type="GO" id="GO:0030170">
    <property type="term" value="F:pyridoxal phosphate binding"/>
    <property type="evidence" value="ECO:0007669"/>
    <property type="project" value="UniProtKB-UniRule"/>
</dbReference>
<dbReference type="GO" id="GO:0044571">
    <property type="term" value="P:[2Fe-2S] cluster assembly"/>
    <property type="evidence" value="ECO:0007669"/>
    <property type="project" value="UniProtKB-UniRule"/>
</dbReference>
<dbReference type="FunFam" id="3.40.640.10:FF:000003">
    <property type="entry name" value="Cysteine desulfurase IscS"/>
    <property type="match status" value="1"/>
</dbReference>
<dbReference type="FunFam" id="3.90.1150.10:FF:000002">
    <property type="entry name" value="Cysteine desulfurase IscS"/>
    <property type="match status" value="1"/>
</dbReference>
<dbReference type="Gene3D" id="3.90.1150.10">
    <property type="entry name" value="Aspartate Aminotransferase, domain 1"/>
    <property type="match status" value="1"/>
</dbReference>
<dbReference type="Gene3D" id="3.40.640.10">
    <property type="entry name" value="Type I PLP-dependent aspartate aminotransferase-like (Major domain)"/>
    <property type="match status" value="1"/>
</dbReference>
<dbReference type="HAMAP" id="MF_00331">
    <property type="entry name" value="Cys_desulf_IscS"/>
    <property type="match status" value="1"/>
</dbReference>
<dbReference type="InterPro" id="IPR000192">
    <property type="entry name" value="Aminotrans_V_dom"/>
</dbReference>
<dbReference type="InterPro" id="IPR020578">
    <property type="entry name" value="Aminotrans_V_PyrdxlP_BS"/>
</dbReference>
<dbReference type="InterPro" id="IPR010240">
    <property type="entry name" value="Cys_deSase_IscS"/>
</dbReference>
<dbReference type="InterPro" id="IPR016454">
    <property type="entry name" value="Cysteine_dSase"/>
</dbReference>
<dbReference type="InterPro" id="IPR015424">
    <property type="entry name" value="PyrdxlP-dep_Trfase"/>
</dbReference>
<dbReference type="InterPro" id="IPR015421">
    <property type="entry name" value="PyrdxlP-dep_Trfase_major"/>
</dbReference>
<dbReference type="InterPro" id="IPR015422">
    <property type="entry name" value="PyrdxlP-dep_Trfase_small"/>
</dbReference>
<dbReference type="NCBIfam" id="TIGR02006">
    <property type="entry name" value="IscS"/>
    <property type="match status" value="1"/>
</dbReference>
<dbReference type="NCBIfam" id="NF010611">
    <property type="entry name" value="PRK14012.1"/>
    <property type="match status" value="1"/>
</dbReference>
<dbReference type="PANTHER" id="PTHR11601:SF34">
    <property type="entry name" value="CYSTEINE DESULFURASE"/>
    <property type="match status" value="1"/>
</dbReference>
<dbReference type="PANTHER" id="PTHR11601">
    <property type="entry name" value="CYSTEINE DESULFURYLASE FAMILY MEMBER"/>
    <property type="match status" value="1"/>
</dbReference>
<dbReference type="Pfam" id="PF00266">
    <property type="entry name" value="Aminotran_5"/>
    <property type="match status" value="1"/>
</dbReference>
<dbReference type="PIRSF" id="PIRSF005572">
    <property type="entry name" value="NifS"/>
    <property type="match status" value="1"/>
</dbReference>
<dbReference type="SUPFAM" id="SSF53383">
    <property type="entry name" value="PLP-dependent transferases"/>
    <property type="match status" value="1"/>
</dbReference>
<dbReference type="PROSITE" id="PS00595">
    <property type="entry name" value="AA_TRANSFER_CLASS_5"/>
    <property type="match status" value="1"/>
</dbReference>
<gene>
    <name evidence="1" type="primary">iscS</name>
    <name type="ordered locus">PA3814</name>
</gene>
<sequence>MKLPIYLDYSATTPVDPRVAQKMSECLLMDGNFGNPASRSHVFGWKAEEAVENARRQVAELVNADPREIVWTSGATESDNLAIKGVAHFYSGKGKHIITSKIEHKAVLDTCRQLEREGFEVTYLEPGEDGLITPALVEAALRDDTILVSVMHVNNEIGTVNDIAAIGELTRSRGVLFHVDAAQSTGKVEIDLDKLKVDLMSFSAHKTYGPKGIGALYVRRKPRVRIEGQMHGGGHERGMRSGTLATHQIVGMGEAFRIAKEEMAQENARVLALRDRFFAQIDGLEELYINGSMTSRVPHNLNVSFNYVEGESLIMALKDLAVSSGSACTSASLEPSYVLRALGRNDELAHSSIRFTFGRFTTEEEIDYAAKKVVEAVSKLRELSPLWDMYKEGVDLSQVEWQAH</sequence>
<organism>
    <name type="scientific">Pseudomonas aeruginosa (strain ATCC 15692 / DSM 22644 / CIP 104116 / JCM 14847 / LMG 12228 / 1C / PRS 101 / PAO1)</name>
    <dbReference type="NCBI Taxonomy" id="208964"/>
    <lineage>
        <taxon>Bacteria</taxon>
        <taxon>Pseudomonadati</taxon>
        <taxon>Pseudomonadota</taxon>
        <taxon>Gammaproteobacteria</taxon>
        <taxon>Pseudomonadales</taxon>
        <taxon>Pseudomonadaceae</taxon>
        <taxon>Pseudomonas</taxon>
    </lineage>
</organism>
<feature type="chain" id="PRO_0000150274" description="Cysteine desulfurase IscS">
    <location>
        <begin position="1"/>
        <end position="404"/>
    </location>
</feature>
<feature type="active site" description="Cysteine persulfide intermediate" evidence="1">
    <location>
        <position position="328"/>
    </location>
</feature>
<feature type="binding site" evidence="1">
    <location>
        <begin position="75"/>
        <end position="76"/>
    </location>
    <ligand>
        <name>pyridoxal 5'-phosphate</name>
        <dbReference type="ChEBI" id="CHEBI:597326"/>
    </ligand>
</feature>
<feature type="binding site" evidence="1">
    <location>
        <position position="155"/>
    </location>
    <ligand>
        <name>pyridoxal 5'-phosphate</name>
        <dbReference type="ChEBI" id="CHEBI:597326"/>
    </ligand>
</feature>
<feature type="binding site" evidence="1">
    <location>
        <position position="183"/>
    </location>
    <ligand>
        <name>pyridoxal 5'-phosphate</name>
        <dbReference type="ChEBI" id="CHEBI:597326"/>
    </ligand>
</feature>
<feature type="binding site" evidence="1">
    <location>
        <begin position="203"/>
        <end position="205"/>
    </location>
    <ligand>
        <name>pyridoxal 5'-phosphate</name>
        <dbReference type="ChEBI" id="CHEBI:597326"/>
    </ligand>
</feature>
<feature type="binding site" evidence="1">
    <location>
        <position position="243"/>
    </location>
    <ligand>
        <name>pyridoxal 5'-phosphate</name>
        <dbReference type="ChEBI" id="CHEBI:597326"/>
    </ligand>
</feature>
<feature type="binding site" description="via persulfide group" evidence="1">
    <location>
        <position position="328"/>
    </location>
    <ligand>
        <name>[2Fe-2S] cluster</name>
        <dbReference type="ChEBI" id="CHEBI:190135"/>
        <note>ligand shared with IscU</note>
    </ligand>
</feature>
<feature type="modified residue" description="N6-(pyridoxal phosphate)lysine" evidence="1">
    <location>
        <position position="206"/>
    </location>
</feature>